<keyword id="KW-0004">4Fe-4S</keyword>
<keyword id="KW-0963">Cytoplasm</keyword>
<keyword id="KW-1015">Disulfide bond</keyword>
<keyword id="KW-0408">Iron</keyword>
<keyword id="KW-0411">Iron-sulfur</keyword>
<keyword id="KW-0479">Metal-binding</keyword>
<keyword id="KW-0489">Methyltransferase</keyword>
<keyword id="KW-1185">Reference proteome</keyword>
<keyword id="KW-0698">rRNA processing</keyword>
<keyword id="KW-0949">S-adenosyl-L-methionine</keyword>
<keyword id="KW-0808">Transferase</keyword>
<keyword id="KW-0819">tRNA processing</keyword>
<accession>A5EVN1</accession>
<comment type="function">
    <text evidence="1">Specifically methylates position 2 of adenine 2503 in 23S rRNA and position 2 of adenine 37 in tRNAs. m2A2503 modification seems to play a crucial role in the proofreading step occurring at the peptidyl transferase center and thus would serve to optimize ribosomal fidelity.</text>
</comment>
<comment type="catalytic activity">
    <reaction evidence="1">
        <text>adenosine(2503) in 23S rRNA + 2 reduced [2Fe-2S]-[ferredoxin] + 2 S-adenosyl-L-methionine = 2-methyladenosine(2503) in 23S rRNA + 5'-deoxyadenosine + L-methionine + 2 oxidized [2Fe-2S]-[ferredoxin] + S-adenosyl-L-homocysteine</text>
        <dbReference type="Rhea" id="RHEA:42916"/>
        <dbReference type="Rhea" id="RHEA-COMP:10000"/>
        <dbReference type="Rhea" id="RHEA-COMP:10001"/>
        <dbReference type="Rhea" id="RHEA-COMP:10152"/>
        <dbReference type="Rhea" id="RHEA-COMP:10282"/>
        <dbReference type="ChEBI" id="CHEBI:17319"/>
        <dbReference type="ChEBI" id="CHEBI:33737"/>
        <dbReference type="ChEBI" id="CHEBI:33738"/>
        <dbReference type="ChEBI" id="CHEBI:57844"/>
        <dbReference type="ChEBI" id="CHEBI:57856"/>
        <dbReference type="ChEBI" id="CHEBI:59789"/>
        <dbReference type="ChEBI" id="CHEBI:74411"/>
        <dbReference type="ChEBI" id="CHEBI:74497"/>
        <dbReference type="EC" id="2.1.1.192"/>
    </reaction>
</comment>
<comment type="catalytic activity">
    <reaction evidence="1">
        <text>adenosine(37) in tRNA + 2 reduced [2Fe-2S]-[ferredoxin] + 2 S-adenosyl-L-methionine = 2-methyladenosine(37) in tRNA + 5'-deoxyadenosine + L-methionine + 2 oxidized [2Fe-2S]-[ferredoxin] + S-adenosyl-L-homocysteine</text>
        <dbReference type="Rhea" id="RHEA:43332"/>
        <dbReference type="Rhea" id="RHEA-COMP:10000"/>
        <dbReference type="Rhea" id="RHEA-COMP:10001"/>
        <dbReference type="Rhea" id="RHEA-COMP:10162"/>
        <dbReference type="Rhea" id="RHEA-COMP:10485"/>
        <dbReference type="ChEBI" id="CHEBI:17319"/>
        <dbReference type="ChEBI" id="CHEBI:33737"/>
        <dbReference type="ChEBI" id="CHEBI:33738"/>
        <dbReference type="ChEBI" id="CHEBI:57844"/>
        <dbReference type="ChEBI" id="CHEBI:57856"/>
        <dbReference type="ChEBI" id="CHEBI:59789"/>
        <dbReference type="ChEBI" id="CHEBI:74411"/>
        <dbReference type="ChEBI" id="CHEBI:74497"/>
        <dbReference type="EC" id="2.1.1.192"/>
    </reaction>
</comment>
<comment type="cofactor">
    <cofactor evidence="1">
        <name>[4Fe-4S] cluster</name>
        <dbReference type="ChEBI" id="CHEBI:49883"/>
    </cofactor>
    <text evidence="1">Binds 1 [4Fe-4S] cluster. The cluster is coordinated with 3 cysteines and an exchangeable S-adenosyl-L-methionine.</text>
</comment>
<comment type="subcellular location">
    <subcellularLocation>
        <location evidence="1">Cytoplasm</location>
    </subcellularLocation>
</comment>
<comment type="miscellaneous">
    <text evidence="1">Reaction proceeds by a ping-pong mechanism involving intermediate methylation of a conserved cysteine residue.</text>
</comment>
<comment type="similarity">
    <text evidence="1">Belongs to the radical SAM superfamily. RlmN family.</text>
</comment>
<proteinExistence type="inferred from homology"/>
<protein>
    <recommendedName>
        <fullName evidence="1">Dual-specificity RNA methyltransferase RlmN</fullName>
        <ecNumber evidence="1">2.1.1.192</ecNumber>
    </recommendedName>
    <alternativeName>
        <fullName evidence="1">23S rRNA (adenine(2503)-C(2))-methyltransferase</fullName>
    </alternativeName>
    <alternativeName>
        <fullName evidence="1">23S rRNA m2A2503 methyltransferase</fullName>
    </alternativeName>
    <alternativeName>
        <fullName evidence="1">Ribosomal RNA large subunit methyltransferase N</fullName>
    </alternativeName>
    <alternativeName>
        <fullName evidence="1">tRNA (adenine(37)-C(2))-methyltransferase</fullName>
    </alternativeName>
    <alternativeName>
        <fullName evidence="1">tRNA m2A37 methyltransferase</fullName>
    </alternativeName>
</protein>
<sequence length="364" mass="41176">MTEKINLFDYTPKALADWFVAQGEQPFRAKQVLKWLYHERVYDFERMTDLSKKLRAMLSEKACVILPQVIADKTARDGTRKWVFQYACTNSIEAVFIPEDDRGTLCISSQAGCALACPFCSTARAGFNRNLTTGEIVVQVWLAKELVHCERNGNSRLITNVVLMGMGEPLINFNQVLPATEIFMSDWGFGLSKRRVTLSTSGVVPAIHKLREVTDLSLAVSLHAPNDELRNKIVPINQRYGLKALIEACALYAENNKQHGGITWEYVMLKGVNDTLEHAQQLADLLRNVPGKINLIPFNEFPNSPFQCSSWEDIVRFQQFLQKAGYIATIRKTRGDDIDAACGQLVGRVNDRIRRERQFQGFKA</sequence>
<dbReference type="EC" id="2.1.1.192" evidence="1"/>
<dbReference type="EMBL" id="CP000513">
    <property type="protein sequence ID" value="ABQ14134.1"/>
    <property type="molecule type" value="Genomic_DNA"/>
</dbReference>
<dbReference type="RefSeq" id="WP_012030849.1">
    <property type="nucleotide sequence ID" value="NC_009446.1"/>
</dbReference>
<dbReference type="SMR" id="A5EVN1"/>
<dbReference type="STRING" id="246195.DNO_0514"/>
<dbReference type="KEGG" id="dno:DNO_0514"/>
<dbReference type="eggNOG" id="COG0820">
    <property type="taxonomic scope" value="Bacteria"/>
</dbReference>
<dbReference type="HOGENOM" id="CLU_029101_0_0_6"/>
<dbReference type="OrthoDB" id="9793973at2"/>
<dbReference type="Proteomes" id="UP000000248">
    <property type="component" value="Chromosome"/>
</dbReference>
<dbReference type="GO" id="GO:0005737">
    <property type="term" value="C:cytoplasm"/>
    <property type="evidence" value="ECO:0007669"/>
    <property type="project" value="UniProtKB-SubCell"/>
</dbReference>
<dbReference type="GO" id="GO:0051539">
    <property type="term" value="F:4 iron, 4 sulfur cluster binding"/>
    <property type="evidence" value="ECO:0007669"/>
    <property type="project" value="UniProtKB-UniRule"/>
</dbReference>
<dbReference type="GO" id="GO:0046872">
    <property type="term" value="F:metal ion binding"/>
    <property type="evidence" value="ECO:0007669"/>
    <property type="project" value="UniProtKB-KW"/>
</dbReference>
<dbReference type="GO" id="GO:0070040">
    <property type="term" value="F:rRNA (adenine(2503)-C2-)-methyltransferase activity"/>
    <property type="evidence" value="ECO:0007669"/>
    <property type="project" value="UniProtKB-UniRule"/>
</dbReference>
<dbReference type="GO" id="GO:0019843">
    <property type="term" value="F:rRNA binding"/>
    <property type="evidence" value="ECO:0007669"/>
    <property type="project" value="UniProtKB-UniRule"/>
</dbReference>
<dbReference type="GO" id="GO:0002935">
    <property type="term" value="F:tRNA (adenine(37)-C2)-methyltransferase activity"/>
    <property type="evidence" value="ECO:0007669"/>
    <property type="project" value="UniProtKB-UniRule"/>
</dbReference>
<dbReference type="GO" id="GO:0000049">
    <property type="term" value="F:tRNA binding"/>
    <property type="evidence" value="ECO:0007669"/>
    <property type="project" value="UniProtKB-UniRule"/>
</dbReference>
<dbReference type="GO" id="GO:0070475">
    <property type="term" value="P:rRNA base methylation"/>
    <property type="evidence" value="ECO:0007669"/>
    <property type="project" value="UniProtKB-UniRule"/>
</dbReference>
<dbReference type="GO" id="GO:0030488">
    <property type="term" value="P:tRNA methylation"/>
    <property type="evidence" value="ECO:0007669"/>
    <property type="project" value="UniProtKB-UniRule"/>
</dbReference>
<dbReference type="CDD" id="cd01335">
    <property type="entry name" value="Radical_SAM"/>
    <property type="match status" value="1"/>
</dbReference>
<dbReference type="FunFam" id="1.10.150.530:FF:000003">
    <property type="entry name" value="Dual-specificity RNA methyltransferase RlmN"/>
    <property type="match status" value="1"/>
</dbReference>
<dbReference type="FunFam" id="3.20.20.70:FF:000008">
    <property type="entry name" value="Dual-specificity RNA methyltransferase RlmN"/>
    <property type="match status" value="1"/>
</dbReference>
<dbReference type="Gene3D" id="1.10.150.530">
    <property type="match status" value="1"/>
</dbReference>
<dbReference type="Gene3D" id="3.20.20.70">
    <property type="entry name" value="Aldolase class I"/>
    <property type="match status" value="1"/>
</dbReference>
<dbReference type="HAMAP" id="MF_01849">
    <property type="entry name" value="RNA_methyltr_RlmN"/>
    <property type="match status" value="1"/>
</dbReference>
<dbReference type="InterPro" id="IPR013785">
    <property type="entry name" value="Aldolase_TIM"/>
</dbReference>
<dbReference type="InterPro" id="IPR040072">
    <property type="entry name" value="Methyltransferase_A"/>
</dbReference>
<dbReference type="InterPro" id="IPR048641">
    <property type="entry name" value="RlmN_N"/>
</dbReference>
<dbReference type="InterPro" id="IPR027492">
    <property type="entry name" value="RNA_MTrfase_RlmN"/>
</dbReference>
<dbReference type="InterPro" id="IPR004383">
    <property type="entry name" value="rRNA_lsu_MTrfase_RlmN/Cfr"/>
</dbReference>
<dbReference type="InterPro" id="IPR007197">
    <property type="entry name" value="rSAM"/>
</dbReference>
<dbReference type="NCBIfam" id="TIGR00048">
    <property type="entry name" value="rRNA_mod_RlmN"/>
    <property type="match status" value="1"/>
</dbReference>
<dbReference type="PANTHER" id="PTHR30544">
    <property type="entry name" value="23S RRNA METHYLTRANSFERASE"/>
    <property type="match status" value="1"/>
</dbReference>
<dbReference type="PANTHER" id="PTHR30544:SF5">
    <property type="entry name" value="RADICAL SAM CORE DOMAIN-CONTAINING PROTEIN"/>
    <property type="match status" value="1"/>
</dbReference>
<dbReference type="Pfam" id="PF04055">
    <property type="entry name" value="Radical_SAM"/>
    <property type="match status" value="1"/>
</dbReference>
<dbReference type="Pfam" id="PF21016">
    <property type="entry name" value="RlmN_N"/>
    <property type="match status" value="1"/>
</dbReference>
<dbReference type="PIRSF" id="PIRSF006004">
    <property type="entry name" value="CHP00048"/>
    <property type="match status" value="1"/>
</dbReference>
<dbReference type="SFLD" id="SFLDF00275">
    <property type="entry name" value="adenosine_C2_methyltransferase"/>
    <property type="match status" value="1"/>
</dbReference>
<dbReference type="SFLD" id="SFLDS00029">
    <property type="entry name" value="Radical_SAM"/>
    <property type="match status" value="1"/>
</dbReference>
<dbReference type="SUPFAM" id="SSF102114">
    <property type="entry name" value="Radical SAM enzymes"/>
    <property type="match status" value="1"/>
</dbReference>
<dbReference type="PROSITE" id="PS51918">
    <property type="entry name" value="RADICAL_SAM"/>
    <property type="match status" value="1"/>
</dbReference>
<organism>
    <name type="scientific">Dichelobacter nodosus (strain VCS1703A)</name>
    <dbReference type="NCBI Taxonomy" id="246195"/>
    <lineage>
        <taxon>Bacteria</taxon>
        <taxon>Pseudomonadati</taxon>
        <taxon>Pseudomonadota</taxon>
        <taxon>Gammaproteobacteria</taxon>
        <taxon>Cardiobacteriales</taxon>
        <taxon>Cardiobacteriaceae</taxon>
        <taxon>Dichelobacter</taxon>
    </lineage>
</organism>
<gene>
    <name evidence="1" type="primary">rlmN</name>
    <name type="ordered locus">DNO_0514</name>
</gene>
<reference key="1">
    <citation type="journal article" date="2007" name="Nat. Biotechnol.">
        <title>Genome sequence and identification of candidate vaccine antigens from the animal pathogen Dichelobacter nodosus.</title>
        <authorList>
            <person name="Myers G.S.A."/>
            <person name="Parker D."/>
            <person name="Al-Hasani K."/>
            <person name="Kennan R.M."/>
            <person name="Seemann T."/>
            <person name="Ren Q."/>
            <person name="Badger J.H."/>
            <person name="Selengut J.D."/>
            <person name="Deboy R.T."/>
            <person name="Tettelin H."/>
            <person name="Boyce J.D."/>
            <person name="McCarl V.P."/>
            <person name="Han X."/>
            <person name="Nelson W.C."/>
            <person name="Madupu R."/>
            <person name="Mohamoud Y."/>
            <person name="Holley T."/>
            <person name="Fedorova N."/>
            <person name="Khouri H."/>
            <person name="Bottomley S.P."/>
            <person name="Whittington R.J."/>
            <person name="Adler B."/>
            <person name="Songer J.G."/>
            <person name="Rood J.I."/>
            <person name="Paulsen I.T."/>
        </authorList>
    </citation>
    <scope>NUCLEOTIDE SEQUENCE [LARGE SCALE GENOMIC DNA]</scope>
    <source>
        <strain>VCS1703A</strain>
    </source>
</reference>
<feature type="chain" id="PRO_0000350157" description="Dual-specificity RNA methyltransferase RlmN">
    <location>
        <begin position="1"/>
        <end position="364"/>
    </location>
</feature>
<feature type="domain" description="Radical SAM core" evidence="2">
    <location>
        <begin position="99"/>
        <end position="337"/>
    </location>
</feature>
<feature type="active site" description="Proton acceptor" evidence="1">
    <location>
        <position position="93"/>
    </location>
</feature>
<feature type="active site" description="S-methylcysteine intermediate" evidence="1">
    <location>
        <position position="342"/>
    </location>
</feature>
<feature type="binding site" evidence="1">
    <location>
        <position position="113"/>
    </location>
    <ligand>
        <name>[4Fe-4S] cluster</name>
        <dbReference type="ChEBI" id="CHEBI:49883"/>
        <note>4Fe-4S-S-AdoMet</note>
    </ligand>
</feature>
<feature type="binding site" evidence="1">
    <location>
        <position position="117"/>
    </location>
    <ligand>
        <name>[4Fe-4S] cluster</name>
        <dbReference type="ChEBI" id="CHEBI:49883"/>
        <note>4Fe-4S-S-AdoMet</note>
    </ligand>
</feature>
<feature type="binding site" evidence="1">
    <location>
        <position position="120"/>
    </location>
    <ligand>
        <name>[4Fe-4S] cluster</name>
        <dbReference type="ChEBI" id="CHEBI:49883"/>
        <note>4Fe-4S-S-AdoMet</note>
    </ligand>
</feature>
<feature type="binding site" evidence="1">
    <location>
        <begin position="167"/>
        <end position="168"/>
    </location>
    <ligand>
        <name>S-adenosyl-L-methionine</name>
        <dbReference type="ChEBI" id="CHEBI:59789"/>
    </ligand>
</feature>
<feature type="binding site" evidence="1">
    <location>
        <position position="199"/>
    </location>
    <ligand>
        <name>S-adenosyl-L-methionine</name>
        <dbReference type="ChEBI" id="CHEBI:59789"/>
    </ligand>
</feature>
<feature type="binding site" evidence="1">
    <location>
        <begin position="221"/>
        <end position="223"/>
    </location>
    <ligand>
        <name>S-adenosyl-L-methionine</name>
        <dbReference type="ChEBI" id="CHEBI:59789"/>
    </ligand>
</feature>
<feature type="binding site" evidence="1">
    <location>
        <position position="299"/>
    </location>
    <ligand>
        <name>S-adenosyl-L-methionine</name>
        <dbReference type="ChEBI" id="CHEBI:59789"/>
    </ligand>
</feature>
<feature type="disulfide bond" description="(transient)" evidence="1">
    <location>
        <begin position="106"/>
        <end position="342"/>
    </location>
</feature>
<name>RLMN_DICNV</name>
<evidence type="ECO:0000255" key="1">
    <source>
        <dbReference type="HAMAP-Rule" id="MF_01849"/>
    </source>
</evidence>
<evidence type="ECO:0000255" key="2">
    <source>
        <dbReference type="PROSITE-ProRule" id="PRU01266"/>
    </source>
</evidence>